<dbReference type="SMR" id="P85240"/>
<dbReference type="GO" id="GO:0006952">
    <property type="term" value="P:defense response"/>
    <property type="evidence" value="ECO:0007669"/>
    <property type="project" value="UniProtKB-KW"/>
</dbReference>
<dbReference type="InterPro" id="IPR005535">
    <property type="entry name" value="Cyclotide"/>
</dbReference>
<dbReference type="InterPro" id="IPR012324">
    <property type="entry name" value="Cyclotide_moebius_CS"/>
</dbReference>
<dbReference type="InterPro" id="IPR036146">
    <property type="entry name" value="Cyclotide_sf"/>
</dbReference>
<dbReference type="Pfam" id="PF03784">
    <property type="entry name" value="Cyclotide"/>
    <property type="match status" value="1"/>
</dbReference>
<dbReference type="SUPFAM" id="SSF57038">
    <property type="entry name" value="Cyclotides"/>
    <property type="match status" value="1"/>
</dbReference>
<dbReference type="PROSITE" id="PS51052">
    <property type="entry name" value="CYCLOTIDE"/>
    <property type="match status" value="1"/>
</dbReference>
<dbReference type="PROSITE" id="PS60009">
    <property type="entry name" value="CYCLOTIDE_MOEBIUS"/>
    <property type="match status" value="1"/>
</dbReference>
<name>CYVB_VIOBI</name>
<feature type="peptide" id="PRO_0000341422" description="Cyclotide vibi-B">
    <location>
        <begin position="1"/>
        <end position="29"/>
    </location>
</feature>
<feature type="disulfide bond" evidence="1 2">
    <location>
        <begin position="5"/>
        <end position="19"/>
    </location>
</feature>
<feature type="disulfide bond" evidence="1 2">
    <location>
        <begin position="9"/>
        <end position="21"/>
    </location>
</feature>
<feature type="disulfide bond" evidence="1 2">
    <location>
        <begin position="14"/>
        <end position="26"/>
    </location>
</feature>
<feature type="cross-link" description="Cyclopeptide (Gly-Asn)" evidence="3">
    <location>
        <begin position="1"/>
        <end position="29"/>
    </location>
</feature>
<feature type="unsure residue" description="L or I" evidence="3">
    <location>
        <position position="2"/>
    </location>
</feature>
<accession>P85240</accession>
<comment type="function">
    <text evidence="4">Probably participates in a plant defense mechanism.</text>
</comment>
<comment type="domain">
    <text evidence="1">The presence of a 'disulfide through disulfide knot' structurally defines this protein as a knottin.</text>
</comment>
<comment type="PTM">
    <text evidence="2 3">This is a cyclic peptide.</text>
</comment>
<comment type="mass spectrometry" mass="2930.0" method="Electrospray" evidence="3"/>
<comment type="similarity">
    <text evidence="2">Belongs to the cyclotide family. Moebius subfamily.</text>
</comment>
<comment type="caution">
    <text evidence="4">This peptide is cyclic. The start position was chosen by similarity to OAK1 (kalata-B1) for which the DNA sequence is known.</text>
</comment>
<evidence type="ECO:0000250" key="1">
    <source>
        <dbReference type="UniProtKB" id="P56254"/>
    </source>
</evidence>
<evidence type="ECO:0000255" key="2">
    <source>
        <dbReference type="PROSITE-ProRule" id="PRU00395"/>
    </source>
</evidence>
<evidence type="ECO:0000269" key="3">
    <source>
    </source>
</evidence>
<evidence type="ECO:0000305" key="4"/>
<protein>
    <recommendedName>
        <fullName>Cyclotide vibi-B</fullName>
    </recommendedName>
</protein>
<proteinExistence type="evidence at protein level"/>
<reference evidence="4" key="1">
    <citation type="journal article" date="2008" name="Phytochemistry">
        <title>The alpine violet, Viola biflora, is a rich source of cyclotides with potent cytotoxicity.</title>
        <authorList>
            <person name="Herrmann A."/>
            <person name="Burman R."/>
            <person name="Mylne J.S."/>
            <person name="Karlsson G."/>
            <person name="Gullbo J."/>
            <person name="Craik D.J."/>
            <person name="Clark R.J."/>
            <person name="Goeransson U."/>
        </authorList>
    </citation>
    <scope>PROTEIN SEQUENCE</scope>
    <scope>MASS SPECTROMETRY</scope>
</reference>
<organism>
    <name type="scientific">Viola biflora</name>
    <name type="common">Yellow wood violet</name>
    <dbReference type="NCBI Taxonomy" id="214529"/>
    <lineage>
        <taxon>Eukaryota</taxon>
        <taxon>Viridiplantae</taxon>
        <taxon>Streptophyta</taxon>
        <taxon>Embryophyta</taxon>
        <taxon>Tracheophyta</taxon>
        <taxon>Spermatophyta</taxon>
        <taxon>Magnoliopsida</taxon>
        <taxon>eudicotyledons</taxon>
        <taxon>Gunneridae</taxon>
        <taxon>Pentapetalae</taxon>
        <taxon>rosids</taxon>
        <taxon>fabids</taxon>
        <taxon>Malpighiales</taxon>
        <taxon>Violaceae</taxon>
        <taxon>Viola</taxon>
        <taxon>Viola subgen. Viola</taxon>
        <taxon>Viola sect. Chamaemelanium</taxon>
    </lineage>
</organism>
<sequence length="29" mass="2955">GLPVCGETCFGGTCNTPGCTCSYPICTRN</sequence>
<keyword id="KW-0903">Direct protein sequencing</keyword>
<keyword id="KW-1015">Disulfide bond</keyword>
<keyword id="KW-0960">Knottin</keyword>
<keyword id="KW-0611">Plant defense</keyword>